<organism>
    <name type="scientific">Yersinia pseudotuberculosis serotype O:1b (strain IP 31758)</name>
    <dbReference type="NCBI Taxonomy" id="349747"/>
    <lineage>
        <taxon>Bacteria</taxon>
        <taxon>Pseudomonadati</taxon>
        <taxon>Pseudomonadota</taxon>
        <taxon>Gammaproteobacteria</taxon>
        <taxon>Enterobacterales</taxon>
        <taxon>Yersiniaceae</taxon>
        <taxon>Yersinia</taxon>
    </lineage>
</organism>
<evidence type="ECO:0000255" key="1">
    <source>
        <dbReference type="HAMAP-Rule" id="MF_01165"/>
    </source>
</evidence>
<reference key="1">
    <citation type="journal article" date="2007" name="PLoS Genet.">
        <title>The complete genome sequence of Yersinia pseudotuberculosis IP31758, the causative agent of Far East scarlet-like fever.</title>
        <authorList>
            <person name="Eppinger M."/>
            <person name="Rosovitz M.J."/>
            <person name="Fricke W.F."/>
            <person name="Rasko D.A."/>
            <person name="Kokorina G."/>
            <person name="Fayolle C."/>
            <person name="Lindler L.E."/>
            <person name="Carniel E."/>
            <person name="Ravel J."/>
        </authorList>
    </citation>
    <scope>NUCLEOTIDE SEQUENCE [LARGE SCALE GENOMIC DNA]</scope>
    <source>
        <strain>IP 31758</strain>
    </source>
</reference>
<comment type="function">
    <text evidence="1">Catalyzes the transfer of the L-Ara4N moiety of the glycolipid undecaprenyl phosphate-alpha-L-Ara4N to lipid A. The modified arabinose is attached to lipid A and is required for resistance to polymyxin and cationic antimicrobial peptides.</text>
</comment>
<comment type="catalytic activity">
    <reaction evidence="1">
        <text>4-amino-4-deoxy-alpha-L-arabinopyranosyl di-trans,octa-cis-undecaprenyl phosphate + lipid IVA = lipid IIA + di-trans,octa-cis-undecaprenyl phosphate.</text>
        <dbReference type="EC" id="2.4.2.43"/>
    </reaction>
</comment>
<comment type="pathway">
    <text evidence="1">Lipopolysaccharide metabolism; 4-amino-4-deoxy-beta-L-arabinose-lipid A biosynthesis.</text>
</comment>
<comment type="subcellular location">
    <subcellularLocation>
        <location evidence="1">Cell inner membrane</location>
        <topology evidence="1">Multi-pass membrane protein</topology>
    </subcellularLocation>
</comment>
<comment type="similarity">
    <text evidence="1">Belongs to the glycosyltransferase 83 family.</text>
</comment>
<proteinExistence type="inferred from homology"/>
<keyword id="KW-0997">Cell inner membrane</keyword>
<keyword id="KW-1003">Cell membrane</keyword>
<keyword id="KW-0328">Glycosyltransferase</keyword>
<keyword id="KW-0441">Lipid A biosynthesis</keyword>
<keyword id="KW-0444">Lipid biosynthesis</keyword>
<keyword id="KW-0443">Lipid metabolism</keyword>
<keyword id="KW-0448">Lipopolysaccharide biosynthesis</keyword>
<keyword id="KW-0472">Membrane</keyword>
<keyword id="KW-0808">Transferase</keyword>
<keyword id="KW-0812">Transmembrane</keyword>
<keyword id="KW-1133">Transmembrane helix</keyword>
<protein>
    <recommendedName>
        <fullName evidence="1">Undecaprenyl phosphate-alpha-4-amino-4-deoxy-L-arabinose arabinosyl transferase</fullName>
        <ecNumber evidence="1">2.4.2.43</ecNumber>
    </recommendedName>
    <alternativeName>
        <fullName evidence="1">4-amino-4-deoxy-L-arabinose lipid A transferase</fullName>
    </alternativeName>
    <alternativeName>
        <fullName evidence="1">Lipid IV(A) 4-amino-4-deoxy-L-arabinosyltransferase</fullName>
    </alternativeName>
    <alternativeName>
        <fullName evidence="1">Undecaprenyl phosphate-alpha-L-Ara4N transferase</fullName>
    </alternativeName>
</protein>
<accession>A7FHH6</accession>
<dbReference type="EC" id="2.4.2.43" evidence="1"/>
<dbReference type="EMBL" id="CP000720">
    <property type="protein sequence ID" value="ABS49041.1"/>
    <property type="molecule type" value="Genomic_DNA"/>
</dbReference>
<dbReference type="RefSeq" id="WP_002211821.1">
    <property type="nucleotide sequence ID" value="NC_009708.1"/>
</dbReference>
<dbReference type="SMR" id="A7FHH6"/>
<dbReference type="CAZy" id="GT83">
    <property type="family name" value="Glycosyltransferase Family 83"/>
</dbReference>
<dbReference type="GeneID" id="57976259"/>
<dbReference type="KEGG" id="ypi:YpsIP31758_1729"/>
<dbReference type="HOGENOM" id="CLU_019200_2_1_6"/>
<dbReference type="UniPathway" id="UPA00037"/>
<dbReference type="Proteomes" id="UP000002412">
    <property type="component" value="Chromosome"/>
</dbReference>
<dbReference type="GO" id="GO:0005886">
    <property type="term" value="C:plasma membrane"/>
    <property type="evidence" value="ECO:0007669"/>
    <property type="project" value="UniProtKB-SubCell"/>
</dbReference>
<dbReference type="GO" id="GO:0103015">
    <property type="term" value="F:4-amino-4-deoxy-L-arabinose transferase activity"/>
    <property type="evidence" value="ECO:0007669"/>
    <property type="project" value="UniProtKB-EC"/>
</dbReference>
<dbReference type="GO" id="GO:0000030">
    <property type="term" value="F:mannosyltransferase activity"/>
    <property type="evidence" value="ECO:0007669"/>
    <property type="project" value="InterPro"/>
</dbReference>
<dbReference type="GO" id="GO:0009245">
    <property type="term" value="P:lipid A biosynthetic process"/>
    <property type="evidence" value="ECO:0007669"/>
    <property type="project" value="UniProtKB-UniRule"/>
</dbReference>
<dbReference type="GO" id="GO:0009103">
    <property type="term" value="P:lipopolysaccharide biosynthetic process"/>
    <property type="evidence" value="ECO:0007669"/>
    <property type="project" value="UniProtKB-KW"/>
</dbReference>
<dbReference type="GO" id="GO:0006493">
    <property type="term" value="P:protein O-linked glycosylation"/>
    <property type="evidence" value="ECO:0007669"/>
    <property type="project" value="InterPro"/>
</dbReference>
<dbReference type="GO" id="GO:0010041">
    <property type="term" value="P:response to iron(III) ion"/>
    <property type="evidence" value="ECO:0007669"/>
    <property type="project" value="TreeGrafter"/>
</dbReference>
<dbReference type="HAMAP" id="MF_01165">
    <property type="entry name" value="ArnT_transfer"/>
    <property type="match status" value="1"/>
</dbReference>
<dbReference type="InterPro" id="IPR022839">
    <property type="entry name" value="ArnT_tfrase"/>
</dbReference>
<dbReference type="InterPro" id="IPR003342">
    <property type="entry name" value="Glyco_trans_39/83"/>
</dbReference>
<dbReference type="InterPro" id="IPR050297">
    <property type="entry name" value="LipidA_mod_glycosyltrf_83"/>
</dbReference>
<dbReference type="NCBIfam" id="NF009784">
    <property type="entry name" value="PRK13279.1"/>
    <property type="match status" value="1"/>
</dbReference>
<dbReference type="PANTHER" id="PTHR33908">
    <property type="entry name" value="MANNOSYLTRANSFERASE YKCB-RELATED"/>
    <property type="match status" value="1"/>
</dbReference>
<dbReference type="PANTHER" id="PTHR33908:SF3">
    <property type="entry name" value="UNDECAPRENYL PHOSPHATE-ALPHA-4-AMINO-4-DEOXY-L-ARABINOSE ARABINOSYL TRANSFERASE"/>
    <property type="match status" value="1"/>
</dbReference>
<dbReference type="Pfam" id="PF02366">
    <property type="entry name" value="PMT"/>
    <property type="match status" value="1"/>
</dbReference>
<feature type="chain" id="PRO_1000065669" description="Undecaprenyl phosphate-alpha-4-amino-4-deoxy-L-arabinose arabinosyl transferase">
    <location>
        <begin position="1"/>
        <end position="554"/>
    </location>
</feature>
<feature type="transmembrane region" description="Helical" evidence="1">
    <location>
        <begin position="4"/>
        <end position="24"/>
    </location>
</feature>
<feature type="transmembrane region" description="Helical" evidence="1">
    <location>
        <begin position="87"/>
        <end position="107"/>
    </location>
</feature>
<feature type="transmembrane region" description="Helical" evidence="1">
    <location>
        <begin position="115"/>
        <end position="135"/>
    </location>
</feature>
<feature type="transmembrane region" description="Helical" evidence="1">
    <location>
        <begin position="178"/>
        <end position="198"/>
    </location>
</feature>
<feature type="transmembrane region" description="Helical" evidence="1">
    <location>
        <begin position="206"/>
        <end position="226"/>
    </location>
</feature>
<feature type="transmembrane region" description="Helical" evidence="1">
    <location>
        <begin position="262"/>
        <end position="282"/>
    </location>
</feature>
<feature type="transmembrane region" description="Helical" evidence="1">
    <location>
        <begin position="293"/>
        <end position="313"/>
    </location>
</feature>
<feature type="transmembrane region" description="Helical" evidence="1">
    <location>
        <begin position="315"/>
        <end position="335"/>
    </location>
</feature>
<feature type="transmembrane region" description="Helical" evidence="1">
    <location>
        <begin position="351"/>
        <end position="371"/>
    </location>
</feature>
<feature type="transmembrane region" description="Helical" evidence="1">
    <location>
        <begin position="384"/>
        <end position="404"/>
    </location>
</feature>
<feature type="transmembrane region" description="Helical" evidence="1">
    <location>
        <begin position="414"/>
        <end position="434"/>
    </location>
</feature>
<name>ARNT_YERP3</name>
<sequence length="554" mass="62289">MKLLKDSGAALLALFFVLVYLLPVNSRLLWQPDETRYAEISREMLQRGDWVVPYFMDIRYFEKPVAGYWFNNISQWIFGDSNFAVRFGSIFSTALSAVLVYWLATLLWRNRSTSVLATLIYLSFLLVFGIGTYAVLDPMISLWLTAAMVSFYLTLKAENWQQKVGAYALLGVACGMGFMTKGFLALAVPVIAVLPIVIQQKRIKDLVVFGPIAIVCAVLLSLPWALAIAQREPDFWNYFFWVEHIQRFAEASAQHKSPIWYYLPILCIGVLPWLGLLPGALFKGWRERATKPELFFLLSWVVMPLLFFSVAKGKLPTYILPCMAPLSLLMAAYATDCANNIRMRALKINGVINLLFGVACALVIVVIGLGLVKDIVAYGPQENQKVWLGVLAFAGWGVTGFITLRNNARNWRWAAACPLLFILLVGYLIPQQVVDSKQPQNFIKNNFSELSSSRYVLTDSVGVAAGLAWELKRSDILMFSEKGELTYGLAYPDSQDNYISNDDFPTWLAQARKEGDVSLVVQLAKNEALPAHLPPADKVNLMNRLALLWYQKTP</sequence>
<gene>
    <name evidence="1" type="primary">arnT</name>
    <name type="ordered locus">YpsIP31758_1729</name>
</gene>